<feature type="chain" id="PRO_0000063468" description="Chaperonin GroEL">
    <location>
        <begin position="1"/>
        <end position="541" status="greater than"/>
    </location>
</feature>
<feature type="binding site" evidence="1">
    <location>
        <begin position="30"/>
        <end position="33"/>
    </location>
    <ligand>
        <name>ATP</name>
        <dbReference type="ChEBI" id="CHEBI:30616"/>
    </ligand>
</feature>
<feature type="binding site" evidence="1">
    <location>
        <position position="51"/>
    </location>
    <ligand>
        <name>ATP</name>
        <dbReference type="ChEBI" id="CHEBI:30616"/>
    </ligand>
</feature>
<feature type="binding site" evidence="1">
    <location>
        <begin position="87"/>
        <end position="91"/>
    </location>
    <ligand>
        <name>ATP</name>
        <dbReference type="ChEBI" id="CHEBI:30616"/>
    </ligand>
</feature>
<feature type="binding site" evidence="1">
    <location>
        <position position="415"/>
    </location>
    <ligand>
        <name>ATP</name>
        <dbReference type="ChEBI" id="CHEBI:30616"/>
    </ligand>
</feature>
<feature type="binding site" evidence="1">
    <location>
        <position position="495"/>
    </location>
    <ligand>
        <name>ATP</name>
        <dbReference type="ChEBI" id="CHEBI:30616"/>
    </ligand>
</feature>
<feature type="non-terminal residue">
    <location>
        <position position="541"/>
    </location>
</feature>
<comment type="function">
    <text evidence="1">Together with its co-chaperonin GroES, plays an essential role in assisting protein folding. The GroEL-GroES system forms a nano-cage that allows encapsulation of the non-native substrate proteins and provides a physical environment optimized to promote and accelerate protein folding.</text>
</comment>
<comment type="catalytic activity">
    <reaction evidence="1">
        <text>ATP + H2O + a folded polypeptide = ADP + phosphate + an unfolded polypeptide.</text>
        <dbReference type="EC" id="5.6.1.7"/>
    </reaction>
</comment>
<comment type="subunit">
    <text evidence="1">Forms a cylinder of 14 subunits composed of two heptameric rings stacked back-to-back. Interacts with the co-chaperonin GroES.</text>
</comment>
<comment type="subcellular location">
    <subcellularLocation>
        <location evidence="1">Cytoplasm</location>
    </subcellularLocation>
</comment>
<comment type="similarity">
    <text evidence="1">Belongs to the chaperonin (HSP60) family.</text>
</comment>
<reference key="1">
    <citation type="journal article" date="1997" name="J. Gen. Appl. Microbiol.">
        <title>Phylogenetical relationship based on groE genes among phenotypically related Enterobacter, Pantoea, Klebsiella, Serratia, and Erwinia species.</title>
        <authorList>
            <person name="Harada H."/>
            <person name="Ishikawa H."/>
        </authorList>
    </citation>
    <scope>NUCLEOTIDE SEQUENCE [GENOMIC DNA]</scope>
    <source>
        <strain>ATCC 33244 / DSM 17873 / BCRC 13199 / CIP 105207 / JCM 6986 / NCPPB 1846</strain>
    </source>
</reference>
<proteinExistence type="inferred from homology"/>
<keyword id="KW-0067">ATP-binding</keyword>
<keyword id="KW-0143">Chaperone</keyword>
<keyword id="KW-0963">Cytoplasm</keyword>
<keyword id="KW-0413">Isomerase</keyword>
<keyword id="KW-0547">Nucleotide-binding</keyword>
<accession>O66218</accession>
<protein>
    <recommendedName>
        <fullName evidence="1">Chaperonin GroEL</fullName>
        <ecNumber evidence="1">5.6.1.7</ecNumber>
    </recommendedName>
    <alternativeName>
        <fullName evidence="1">60 kDa chaperonin</fullName>
    </alternativeName>
    <alternativeName>
        <fullName evidence="1">Chaperonin-60</fullName>
        <shortName evidence="1">Cpn60</shortName>
    </alternativeName>
</protein>
<gene>
    <name evidence="1" type="primary">groEL</name>
    <name evidence="1" type="synonym">groL</name>
    <name type="synonym">mopA</name>
</gene>
<organism>
    <name type="scientific">Pantoea ananas</name>
    <name type="common">Erwinia uredovora</name>
    <dbReference type="NCBI Taxonomy" id="553"/>
    <lineage>
        <taxon>Bacteria</taxon>
        <taxon>Pseudomonadati</taxon>
        <taxon>Pseudomonadota</taxon>
        <taxon>Gammaproteobacteria</taxon>
        <taxon>Enterobacterales</taxon>
        <taxon>Erwiniaceae</taxon>
        <taxon>Pantoea</taxon>
    </lineage>
</organism>
<dbReference type="EC" id="5.6.1.7" evidence="1"/>
<dbReference type="EMBL" id="AB008151">
    <property type="protein sequence ID" value="BAA25235.1"/>
    <property type="molecule type" value="Genomic_DNA"/>
</dbReference>
<dbReference type="SMR" id="O66218"/>
<dbReference type="GO" id="GO:0005737">
    <property type="term" value="C:cytoplasm"/>
    <property type="evidence" value="ECO:0007669"/>
    <property type="project" value="UniProtKB-SubCell"/>
</dbReference>
<dbReference type="GO" id="GO:0005524">
    <property type="term" value="F:ATP binding"/>
    <property type="evidence" value="ECO:0007669"/>
    <property type="project" value="UniProtKB-KW"/>
</dbReference>
<dbReference type="GO" id="GO:0140662">
    <property type="term" value="F:ATP-dependent protein folding chaperone"/>
    <property type="evidence" value="ECO:0007669"/>
    <property type="project" value="InterPro"/>
</dbReference>
<dbReference type="GO" id="GO:0016853">
    <property type="term" value="F:isomerase activity"/>
    <property type="evidence" value="ECO:0007669"/>
    <property type="project" value="UniProtKB-KW"/>
</dbReference>
<dbReference type="GO" id="GO:0042026">
    <property type="term" value="P:protein refolding"/>
    <property type="evidence" value="ECO:0007669"/>
    <property type="project" value="InterPro"/>
</dbReference>
<dbReference type="CDD" id="cd03344">
    <property type="entry name" value="GroEL"/>
    <property type="match status" value="1"/>
</dbReference>
<dbReference type="FunFam" id="1.10.560.10:FF:000001">
    <property type="entry name" value="60 kDa chaperonin"/>
    <property type="match status" value="1"/>
</dbReference>
<dbReference type="FunFam" id="3.50.7.10:FF:000001">
    <property type="entry name" value="60 kDa chaperonin"/>
    <property type="match status" value="1"/>
</dbReference>
<dbReference type="Gene3D" id="3.50.7.10">
    <property type="entry name" value="GroEL"/>
    <property type="match status" value="1"/>
</dbReference>
<dbReference type="Gene3D" id="1.10.560.10">
    <property type="entry name" value="GroEL-like equatorial domain"/>
    <property type="match status" value="1"/>
</dbReference>
<dbReference type="Gene3D" id="3.30.260.10">
    <property type="entry name" value="TCP-1-like chaperonin intermediate domain"/>
    <property type="match status" value="1"/>
</dbReference>
<dbReference type="HAMAP" id="MF_00600">
    <property type="entry name" value="CH60"/>
    <property type="match status" value="1"/>
</dbReference>
<dbReference type="InterPro" id="IPR018370">
    <property type="entry name" value="Chaperonin_Cpn60_CS"/>
</dbReference>
<dbReference type="InterPro" id="IPR001844">
    <property type="entry name" value="Cpn60/GroEL"/>
</dbReference>
<dbReference type="InterPro" id="IPR002423">
    <property type="entry name" value="Cpn60/GroEL/TCP-1"/>
</dbReference>
<dbReference type="InterPro" id="IPR027409">
    <property type="entry name" value="GroEL-like_apical_dom_sf"/>
</dbReference>
<dbReference type="InterPro" id="IPR027413">
    <property type="entry name" value="GROEL-like_equatorial_sf"/>
</dbReference>
<dbReference type="InterPro" id="IPR027410">
    <property type="entry name" value="TCP-1-like_intermed_sf"/>
</dbReference>
<dbReference type="NCBIfam" id="TIGR02348">
    <property type="entry name" value="GroEL"/>
    <property type="match status" value="1"/>
</dbReference>
<dbReference type="NCBIfam" id="NF000592">
    <property type="entry name" value="PRK00013.1"/>
    <property type="match status" value="1"/>
</dbReference>
<dbReference type="NCBIfam" id="NF009487">
    <property type="entry name" value="PRK12849.1"/>
    <property type="match status" value="1"/>
</dbReference>
<dbReference type="NCBIfam" id="NF009488">
    <property type="entry name" value="PRK12850.1"/>
    <property type="match status" value="1"/>
</dbReference>
<dbReference type="NCBIfam" id="NF009489">
    <property type="entry name" value="PRK12851.1"/>
    <property type="match status" value="1"/>
</dbReference>
<dbReference type="PANTHER" id="PTHR45633">
    <property type="entry name" value="60 KDA HEAT SHOCK PROTEIN, MITOCHONDRIAL"/>
    <property type="match status" value="1"/>
</dbReference>
<dbReference type="Pfam" id="PF00118">
    <property type="entry name" value="Cpn60_TCP1"/>
    <property type="match status" value="1"/>
</dbReference>
<dbReference type="PRINTS" id="PR00298">
    <property type="entry name" value="CHAPERONIN60"/>
</dbReference>
<dbReference type="SUPFAM" id="SSF52029">
    <property type="entry name" value="GroEL apical domain-like"/>
    <property type="match status" value="1"/>
</dbReference>
<dbReference type="SUPFAM" id="SSF48592">
    <property type="entry name" value="GroEL equatorial domain-like"/>
    <property type="match status" value="1"/>
</dbReference>
<dbReference type="SUPFAM" id="SSF54849">
    <property type="entry name" value="GroEL-intermediate domain like"/>
    <property type="match status" value="1"/>
</dbReference>
<dbReference type="PROSITE" id="PS00296">
    <property type="entry name" value="CHAPERONINS_CPN60"/>
    <property type="match status" value="1"/>
</dbReference>
<sequence>MAAKDVKFGNDARVKMLRGVNVLADAVKVTLGPKGRNVVLDKSFGAPTITKDGVSVAREIELEDKFENMGAQMVKEVASKANDAAGDGTTTATVLAQSIITEGLKAVAAGMNPMDLKRGIDQAVIAAVEELKKLSVPCSDSKAIAQVGTISANSDETVGTLIAQAMEKVGKEGVITVEEGTGLQDELDVVEGMQFDRGYLSPYFINKPETGAVELETPFILLADKKISNIREMLPVLEAVAKAGKPLLIIAEDVEGEALATLVVNTMRGIVKVAAVKAPGFGDRRKAMLQDIAILTGGTVISEEIGMELEKAALEDLGQAKRVVINKDTTTIIDGVGEETTIQGRVTQIRQQIEEATSDYDKEKLQERVAKLAGGVAVLKVGAATEVEMKEKKARVEDALHATRAAVEEGVVAGGGVALVRVAAQLTELRGQNEDQNVGIKVALRAMESPLRQIVSNAGEEPSVVANNVKAGDGNYGYNAQTEEYGNMIDFGILDPTKVTRSALQYAASVAGLMITTECMVTDLPKGDAPDLGAGAGGMGG</sequence>
<evidence type="ECO:0000255" key="1">
    <source>
        <dbReference type="HAMAP-Rule" id="MF_00600"/>
    </source>
</evidence>
<name>CH60_PANAN</name>